<gene>
    <name type="primary">CNTNAP1</name>
    <name type="synonym">CASPR</name>
    <name type="synonym">NRXN4</name>
</gene>
<keyword id="KW-0130">Cell adhesion</keyword>
<keyword id="KW-0965">Cell junction</keyword>
<keyword id="KW-0225">Disease variant</keyword>
<keyword id="KW-1015">Disulfide bond</keyword>
<keyword id="KW-0245">EGF-like domain</keyword>
<keyword id="KW-0325">Glycoprotein</keyword>
<keyword id="KW-0472">Membrane</keyword>
<keyword id="KW-0622">Neuropathy</keyword>
<keyword id="KW-0597">Phosphoprotein</keyword>
<keyword id="KW-1267">Proteomics identification</keyword>
<keyword id="KW-1185">Reference proteome</keyword>
<keyword id="KW-0677">Repeat</keyword>
<keyword id="KW-0729">SH3-binding</keyword>
<keyword id="KW-0732">Signal</keyword>
<keyword id="KW-0812">Transmembrane</keyword>
<keyword id="KW-1133">Transmembrane helix</keyword>
<name>CNTP1_HUMAN</name>
<accession>P78357</accession>
<sequence length="1384" mass="156267">MMHLRLFCILLAAVSGAEGWGYYGCDEELVGPLYARSLGASSYYSLLTAPRFARLHGISGWSPRIGDPNPWLQIDLMKKHRIRAVATQGSFNSWDWVTRYMLLYGDRVDSWTPFYQRGHNSTFFGNVNESAVVRHDLHFHFTARYIRIVPLAWNPRGKIGLRLGLYGCPYKADILYFDGDDAISYRFPRGVSRSLWDVFAFSFKTEEKDGLLLHAEGAQGDYVTLELEGAHLLLHMSLGSSPIQPRPGHTTVSAGGVLNDQHWHYVRVDRFGRDVNFTLDGYVQRFILNGDFERLNLDTEMFIGGLVGAARKNLAYRHNFRGCIENVIFNRVNIADLAVRRHSRITFEGKVAFRCLDPVPHPINFGGPHNFVQVPGFPRRGRLAVSFRFRTWDLTGLLLFSRLGDGLGHVELTLSEGQVNVSIAQSGRKKLQFAAGYRLNDGFWHEVNFVAQENHAVISIDDVEGAEVRVSYPLLIRTGTSYFFGGCPKPASRWDCHSNQTAFHGCMELLKVDGQLVNLTLVEGRRLGFYAEVLFDTCGITDRCSPNMCEHDGRCYQSWDDFICYCELTGYKGETCHTPLYKESCEAYRLSGKTSGNFTIDPDGSGPLKPFVVYCDIRENRAWTVVRHDRLWTTRVTGSSMERPFLGAIQYWNASWEEVSALANASQHCEQWIEFSCYNSRLLNTAGGYPYSFWIGRNEEQHFYWGGSQPGIQRCACGLDRSCVDPALYCNCDADQPQWRTDKGLLTFVDHLPVTQVVIGDTNRSTSEAQFFLRPLRCYGDRNSWNTISFHTGAALRFPPIRANHSLDVSFYFRTSAPSGVFLENMGGPYCQWRRPYVRVELNTSRDVVFAFDVGNGDENLTVHSDDFEFNDDEWHLVRAEINVKQARLRVDHRPWVLRPMPLQTYIWMEYDQPLYVGSAELKRRPFVGCLRAMRLNGVTLNLEGRANASEGTSPNCTGHCAHPRLPCFHGGRCVERYSYYTCDCDLTAFDGPYCNHDIGGFFEPGTWMRYNLQSALRSAAREFSHMLSRPVPGYEPGYIPGYDTPGYVPGYHGPGYRLPDYPRPGRPVPGYRGPVYNVTGEEVSFSFSTSSAPAVLLYVSSFVRDYMAVLIKDDGTLQLRYQLGTSPYVYQLTTRPVTDGQPHSINITRVYRNLFIQVDYFPLTEQKFSLLVDSQLDSPKALYLGRVMETGVIDPEIQRYNTPGFSGCLSGVRFNNVAPLKTHFRTPRPMTAELAEALRVQGELSESNCGAMPRLVSEVPPELDPWYLPPDFPYYHDEGWVAILLGFLVAFLLLGLVGMLVLFYLQNHRYKGSYHTNEPKAAHEYHPGSKPPLPTSGPAQVPTPTAAPNQAPASAPAPAPTPAPAPGPRDQNLPQILEESRSE</sequence>
<comment type="function">
    <text evidence="9 12 14">Required, with CNTNAP2, for radial and longitudinal organization of myelinated axons. Plays a role in the formation of functional distinct domains critical for saltatory conduction of nerve impulses in myelinated nerve fibers. Demarcates the paranodal region of the axo-glial junction. In association with contactin involved in the signaling between axons and myelinating glial cells.</text>
</comment>
<comment type="subunit">
    <text evidence="16">Interacts with CNTN1/contactin in cis form.</text>
</comment>
<comment type="interaction">
    <interactant intactId="EBI-1751903">
        <id>P78357</id>
    </interactant>
    <interactant intactId="EBI-389883">
        <id>P16333</id>
        <label>NCK1</label>
    </interactant>
    <organismsDiffer>false</organismsDiffer>
    <experiments>2</experiments>
</comment>
<comment type="subcellular location">
    <subcellularLocation>
        <location evidence="17">Membrane</location>
        <topology evidence="17">Single-pass type I membrane protein</topology>
    </subcellularLocation>
    <subcellularLocation>
        <location evidence="2">Cell junction</location>
        <location evidence="2">Paranodal septate junction</location>
    </subcellularLocation>
</comment>
<comment type="tissue specificity">
    <text>Predominantly expressed in brain. Weak expression detected in ovary, pancreas, colon, lung, heart, intestine and testis.</text>
</comment>
<comment type="disease" evidence="9 11 13 14">
    <disease id="DI-04378">
        <name>Lethal congenital contracture syndrome 7</name>
        <acronym>LCCS7</acronym>
        <description>A form of lethal congenital contracture syndrome, an autosomal recessive disorder characterized by degeneration of anterior horn neurons, extreme skeletal muscle atrophy and congenital non-progressive joint contractures. The contractures can involve the upper or lower limbs and/or the vertebral column, leading to various degrees of flexion or extension limitations evident at birth. LCCS7 is a severe axoglial disease characterized by congenital distal joint contractures, polyhydramnios, reduced fetal movements, and motor paralysis leading to death early in the neonatal period.</description>
        <dbReference type="MIM" id="616286"/>
    </disease>
    <text>The disease is caused by variants affecting the gene represented in this entry.</text>
</comment>
<comment type="disease" evidence="10 12 14 15">
    <disease id="DI-05377">
        <name>Neuropathy, congenital hypomyelinating, 3</name>
        <acronym>CHN3</acronym>
        <description>A form of congenital hypomyelinating neuropathy, a neurologic disorder characterized by early-onset hypotonia, areflexia, distal muscle weakness, and very slow nerve conduction velocities (NCV) resulting from improper myelination of axons. In its extreme form, it may present with severe joint contractures or arthrogryposis multiplex congenita and respiratory insufficiency. In less severe cases patients may achieve walking. Patients lack both active myelin breakdown and well-organized onion bulbs on sural nerve biopsies, have absence of inflammation, and show hypomyelination of most or all fibers. CHN3 is a severe autosomal recessive form characterized by onset of neurogenic muscle impairment in utero. Affected individuals have profoundly impaired psychomotor development and may die in infancy or early childhood.</description>
        <dbReference type="MIM" id="618186"/>
    </disease>
    <text>The disease is caused by variants affecting the gene represented in this entry.</text>
</comment>
<comment type="similarity">
    <text evidence="17">Belongs to the neurexin family.</text>
</comment>
<feature type="signal peptide" evidence="3">
    <location>
        <begin position="1"/>
        <end position="19"/>
    </location>
</feature>
<feature type="chain" id="PRO_0000019503" description="Contactin-associated protein 1">
    <location>
        <begin position="20"/>
        <end position="1384"/>
    </location>
</feature>
<feature type="topological domain" description="Extracellular" evidence="3">
    <location>
        <begin position="20"/>
        <end position="1283"/>
    </location>
</feature>
<feature type="transmembrane region" description="Helical" evidence="3">
    <location>
        <begin position="1284"/>
        <end position="1304"/>
    </location>
</feature>
<feature type="topological domain" description="Cytoplasmic" evidence="3">
    <location>
        <begin position="1305"/>
        <end position="1384"/>
    </location>
</feature>
<feature type="domain" description="F5/8 type C" evidence="5">
    <location>
        <begin position="25"/>
        <end position="168"/>
    </location>
</feature>
<feature type="domain" description="Laminin G-like 1" evidence="6">
    <location>
        <begin position="203"/>
        <end position="355"/>
    </location>
</feature>
<feature type="domain" description="Laminin G-like 2" evidence="6">
    <location>
        <begin position="389"/>
        <end position="538"/>
    </location>
</feature>
<feature type="domain" description="EGF-like 1" evidence="4">
    <location>
        <begin position="540"/>
        <end position="577"/>
    </location>
</feature>
<feature type="domain" description="Fibrinogen C-terminal" evidence="7">
    <location>
        <begin position="576"/>
        <end position="795"/>
    </location>
</feature>
<feature type="domain" description="Laminin G-like 3" evidence="6">
    <location>
        <begin position="813"/>
        <end position="956"/>
    </location>
</feature>
<feature type="domain" description="EGF-like 2" evidence="4">
    <location>
        <begin position="957"/>
        <end position="996"/>
    </location>
</feature>
<feature type="domain" description="Laminin G-like 4" evidence="6">
    <location>
        <begin position="1088"/>
        <end position="1250"/>
    </location>
</feature>
<feature type="region of interest" description="Disordered" evidence="8">
    <location>
        <begin position="1319"/>
        <end position="1384"/>
    </location>
</feature>
<feature type="short sequence motif" description="SH3-binding" evidence="3">
    <location>
        <begin position="1328"/>
        <end position="1369"/>
    </location>
</feature>
<feature type="compositionally biased region" description="Basic and acidic residues" evidence="8">
    <location>
        <begin position="1319"/>
        <end position="1328"/>
    </location>
</feature>
<feature type="compositionally biased region" description="Low complexity" evidence="8">
    <location>
        <begin position="1339"/>
        <end position="1355"/>
    </location>
</feature>
<feature type="compositionally biased region" description="Pro residues" evidence="8">
    <location>
        <begin position="1356"/>
        <end position="1368"/>
    </location>
</feature>
<feature type="modified residue" description="Phosphoserine" evidence="2">
    <location>
        <position position="1383"/>
    </location>
</feature>
<feature type="glycosylation site" description="N-linked (GlcNAc...) asparagine" evidence="3">
    <location>
        <position position="120"/>
    </location>
</feature>
<feature type="glycosylation site" description="N-linked (GlcNAc...) asparagine" evidence="3">
    <location>
        <position position="128"/>
    </location>
</feature>
<feature type="glycosylation site" description="N-linked (GlcNAc...) asparagine" evidence="3">
    <location>
        <position position="276"/>
    </location>
</feature>
<feature type="glycosylation site" description="N-linked (GlcNAc...) asparagine" evidence="3">
    <location>
        <position position="420"/>
    </location>
</feature>
<feature type="glycosylation site" description="N-linked (GlcNAc...) asparagine" evidence="3">
    <location>
        <position position="499"/>
    </location>
</feature>
<feature type="glycosylation site" description="N-linked (GlcNAc...) asparagine" evidence="3">
    <location>
        <position position="518"/>
    </location>
</feature>
<feature type="glycosylation site" description="N-linked (GlcNAc...) asparagine" evidence="3">
    <location>
        <position position="597"/>
    </location>
</feature>
<feature type="glycosylation site" description="N-linked (GlcNAc...) asparagine" evidence="3">
    <location>
        <position position="653"/>
    </location>
</feature>
<feature type="glycosylation site" description="N-linked (GlcNAc...) asparagine" evidence="3">
    <location>
        <position position="664"/>
    </location>
</feature>
<feature type="glycosylation site" description="N-linked (GlcNAc...) asparagine" evidence="3">
    <location>
        <position position="763"/>
    </location>
</feature>
<feature type="glycosylation site" description="N-linked (GlcNAc...) asparagine" evidence="3">
    <location>
        <position position="804"/>
    </location>
</feature>
<feature type="glycosylation site" description="N-linked (GlcNAc...) asparagine" evidence="3">
    <location>
        <position position="843"/>
    </location>
</feature>
<feature type="glycosylation site" description="N-linked (GlcNAc...) asparagine" evidence="3">
    <location>
        <position position="860"/>
    </location>
</feature>
<feature type="glycosylation site" description="N-linked (GlcNAc...) asparagine" evidence="3">
    <location>
        <position position="948"/>
    </location>
</feature>
<feature type="glycosylation site" description="N-linked (GlcNAc...) asparagine" evidence="3">
    <location>
        <position position="956"/>
    </location>
</feature>
<feature type="glycosylation site" description="N-linked (GlcNAc...) asparagine" evidence="3">
    <location>
        <position position="1078"/>
    </location>
</feature>
<feature type="glycosylation site" description="N-linked (GlcNAc...) asparagine" evidence="3">
    <location>
        <position position="1147"/>
    </location>
</feature>
<feature type="disulfide bond" evidence="1">
    <location>
        <begin position="25"/>
        <end position="168"/>
    </location>
</feature>
<feature type="disulfide bond" evidence="1">
    <location>
        <begin position="323"/>
        <end position="355"/>
    </location>
</feature>
<feature type="disulfide bond" evidence="1">
    <location>
        <begin position="506"/>
        <end position="538"/>
    </location>
</feature>
<feature type="disulfide bond" evidence="1">
    <location>
        <begin position="544"/>
        <end position="555"/>
    </location>
</feature>
<feature type="disulfide bond" evidence="1">
    <location>
        <begin position="549"/>
        <end position="564"/>
    </location>
</feature>
<feature type="disulfide bond" evidence="1">
    <location>
        <begin position="566"/>
        <end position="576"/>
    </location>
</feature>
<feature type="disulfide bond" evidence="1">
    <location>
        <begin position="930"/>
        <end position="957"/>
    </location>
</feature>
<feature type="disulfide bond" evidence="1">
    <location>
        <begin position="961"/>
        <end position="974"/>
    </location>
</feature>
<feature type="disulfide bond" evidence="1">
    <location>
        <begin position="968"/>
        <end position="983"/>
    </location>
</feature>
<feature type="disulfide bond" evidence="1">
    <location>
        <begin position="985"/>
        <end position="995"/>
    </location>
</feature>
<feature type="disulfide bond" evidence="1">
    <location>
        <begin position="1209"/>
        <end position="1250"/>
    </location>
</feature>
<feature type="sequence variant" id="VAR_081766" description="In CHN3." evidence="15">
    <original>P</original>
    <variation>Q</variation>
    <location>
        <position position="50"/>
    </location>
</feature>
<feature type="sequence variant" id="VAR_081767" description="In CHN3; dbSNP:rs1567969825." evidence="15">
    <original>L</original>
    <variation>P</variation>
    <location>
        <position position="212"/>
    </location>
</feature>
<feature type="sequence variant" id="VAR_078818" description="In LCCS7; dbSNP:rs768554986." evidence="11">
    <original>C</original>
    <variation>R</variation>
    <location>
        <position position="323"/>
    </location>
</feature>
<feature type="sequence variant" id="VAR_078819" description="In CHN3; dbSNP:rs779027563." evidence="10">
    <original>R</original>
    <variation>P</variation>
    <location>
        <position position="388"/>
    </location>
</feature>
<feature type="sequence variant" id="VAR_050267" description="In dbSNP:rs35437096.">
    <original>V</original>
    <variation>L</variation>
    <location>
        <position position="522"/>
    </location>
</feature>
<feature type="sequence variant" id="VAR_081768" description="In CHN3." evidence="15">
    <location>
        <begin position="559"/>
        <end position="1384"/>
    </location>
</feature>
<feature type="sequence variant" id="VAR_081769" description="In CHN3." evidence="15">
    <location>
        <begin position="621"/>
        <end position="1384"/>
    </location>
</feature>
<feature type="sequence variant" id="VAR_078820" description="In LCCS7 and CHN3." evidence="11 12">
    <location>
        <begin position="623"/>
        <end position="1384"/>
    </location>
</feature>
<feature type="sequence variant" id="VAR_078821" description="In CHN3." evidence="12 14">
    <location>
        <begin position="671"/>
        <end position="1384"/>
    </location>
</feature>
<feature type="sequence variant" id="VAR_078822" description="In LCCS7." evidence="14">
    <location>
        <begin position="672"/>
        <end position="1384"/>
    </location>
</feature>
<feature type="sequence variant" id="VAR_081770" description="In CHN3." evidence="15">
    <original>R</original>
    <variation>P</variation>
    <location>
        <position position="714"/>
    </location>
</feature>
<feature type="sequence variant" id="VAR_078823" description="In CHN3; dbSNP:rs761805324." evidence="12 14">
    <original>R</original>
    <variation>C</variation>
    <location>
        <position position="764"/>
    </location>
</feature>
<feature type="sequence variant" id="VAR_081771" description="In CHN3." evidence="15">
    <location>
        <begin position="782"/>
        <end position="1384"/>
    </location>
</feature>
<feature type="sequence variant" id="VAR_081772" description="In CHN3." evidence="15">
    <location>
        <begin position="896"/>
        <end position="1384"/>
    </location>
</feature>
<protein>
    <recommendedName>
        <fullName>Contactin-associated protein 1</fullName>
        <shortName>Caspr</shortName>
        <shortName>Caspr1</shortName>
    </recommendedName>
    <alternativeName>
        <fullName>Neurexin IV</fullName>
    </alternativeName>
    <alternativeName>
        <fullName>Neurexin-4</fullName>
    </alternativeName>
    <alternativeName>
        <fullName>p190</fullName>
    </alternativeName>
</protein>
<evidence type="ECO:0000250" key="1"/>
<evidence type="ECO:0000250" key="2">
    <source>
        <dbReference type="UniProtKB" id="O54991"/>
    </source>
</evidence>
<evidence type="ECO:0000255" key="3"/>
<evidence type="ECO:0000255" key="4">
    <source>
        <dbReference type="PROSITE-ProRule" id="PRU00076"/>
    </source>
</evidence>
<evidence type="ECO:0000255" key="5">
    <source>
        <dbReference type="PROSITE-ProRule" id="PRU00081"/>
    </source>
</evidence>
<evidence type="ECO:0000255" key="6">
    <source>
        <dbReference type="PROSITE-ProRule" id="PRU00122"/>
    </source>
</evidence>
<evidence type="ECO:0000255" key="7">
    <source>
        <dbReference type="PROSITE-ProRule" id="PRU00739"/>
    </source>
</evidence>
<evidence type="ECO:0000256" key="8">
    <source>
        <dbReference type="SAM" id="MobiDB-lite"/>
    </source>
</evidence>
<evidence type="ECO:0000269" key="9">
    <source>
    </source>
</evidence>
<evidence type="ECO:0000269" key="10">
    <source>
    </source>
</evidence>
<evidence type="ECO:0000269" key="11">
    <source>
    </source>
</evidence>
<evidence type="ECO:0000269" key="12">
    <source>
    </source>
</evidence>
<evidence type="ECO:0000269" key="13">
    <source>
    </source>
</evidence>
<evidence type="ECO:0000269" key="14">
    <source>
    </source>
</evidence>
<evidence type="ECO:0000269" key="15">
    <source>
    </source>
</evidence>
<evidence type="ECO:0000269" key="16">
    <source>
    </source>
</evidence>
<evidence type="ECO:0000305" key="17"/>
<organism>
    <name type="scientific">Homo sapiens</name>
    <name type="common">Human</name>
    <dbReference type="NCBI Taxonomy" id="9606"/>
    <lineage>
        <taxon>Eukaryota</taxon>
        <taxon>Metazoa</taxon>
        <taxon>Chordata</taxon>
        <taxon>Craniata</taxon>
        <taxon>Vertebrata</taxon>
        <taxon>Euteleostomi</taxon>
        <taxon>Mammalia</taxon>
        <taxon>Eutheria</taxon>
        <taxon>Euarchontoglires</taxon>
        <taxon>Primates</taxon>
        <taxon>Haplorrhini</taxon>
        <taxon>Catarrhini</taxon>
        <taxon>Hominidae</taxon>
        <taxon>Homo</taxon>
    </lineage>
</organism>
<reference key="1">
    <citation type="journal article" date="1997" name="EMBO J.">
        <title>Identification of a novel contactin-associated transmembrane receptor with multiple domains implicated in protein-protein interactions.</title>
        <authorList>
            <person name="Peles E."/>
            <person name="Nativ M."/>
            <person name="Lustig M."/>
            <person name="Grumet M."/>
            <person name="Schilling J."/>
            <person name="Martinez R."/>
            <person name="Plowman G.D."/>
            <person name="Schlessinger J."/>
        </authorList>
    </citation>
    <scope>NUCLEOTIDE SEQUENCE [MRNA]</scope>
    <scope>INTERACTION WITH CONTACTIN</scope>
    <source>
        <tissue>Neuroblastoma</tissue>
    </source>
</reference>
<reference key="2">
    <citation type="journal article" date="2014" name="Hum. Mol. Genet.">
        <title>Mutations in CNTNAP1 and ADCY6 are responsible for severe arthrogryposis multiplex congenita with axoglial defects.</title>
        <authorList>
            <person name="Laquerriere A."/>
            <person name="Maluenda J."/>
            <person name="Camus A."/>
            <person name="Fontenas L."/>
            <person name="Dieterich K."/>
            <person name="Nolent F."/>
            <person name="Zhou J."/>
            <person name="Monnier N."/>
            <person name="Latour P."/>
            <person name="Gentil D."/>
            <person name="Heron D."/>
            <person name="Desguerres I."/>
            <person name="Landrieu P."/>
            <person name="Beneteau C."/>
            <person name="Delaporte B."/>
            <person name="Bellesme C."/>
            <person name="Baumann C."/>
            <person name="Capri Y."/>
            <person name="Goldenberg A."/>
            <person name="Lyonnet S."/>
            <person name="Bonneau D."/>
            <person name="Estournet B."/>
            <person name="Quijano-Roy S."/>
            <person name="Francannet C."/>
            <person name="Odent S."/>
            <person name="Saint-Frison M.H."/>
            <person name="Sigaudy S."/>
            <person name="Figarella-Branger D."/>
            <person name="Gelot A."/>
            <person name="Mussini J.M."/>
            <person name="Lacroix C."/>
            <person name="Drouin-Garraud V."/>
            <person name="Malinge M.C."/>
            <person name="Attie-Bitach T."/>
            <person name="Bessieres B."/>
            <person name="Bonniere M."/>
            <person name="Encha-Razavi F."/>
            <person name="Beaufrere A.M."/>
            <person name="Khung-Savatovsky S."/>
            <person name="Perez M.J."/>
            <person name="Vasiljevic A."/>
            <person name="Mercier S."/>
            <person name="Roume J."/>
            <person name="Trestard L."/>
            <person name="Saugier-Veber P."/>
            <person name="Cordier M.P."/>
            <person name="Layet V."/>
            <person name="Legendre M."/>
            <person name="Vigouroux-Castera A."/>
            <person name="Lunardi J."/>
            <person name="Bayes M."/>
            <person name="Jouk P.S."/>
            <person name="Rigonnot L."/>
            <person name="Granier M."/>
            <person name="Sternberg D."/>
            <person name="Warszawski J."/>
            <person name="Gut I."/>
            <person name="Gonzales M."/>
            <person name="Tawk M."/>
            <person name="Melki J."/>
        </authorList>
    </citation>
    <scope>INVOLVEMENT IN LCCS7</scope>
    <scope>FUNCTION</scope>
</reference>
<reference key="3">
    <citation type="journal article" date="2016" name="Eur. J. Hum. Genet.">
        <title>Two novel variants in CNTNAP1 in two siblings presenting with congenital hypotonia and hypomyelinating neuropathy.</title>
        <authorList>
            <person name="Nizon M."/>
            <person name="Cogne B."/>
            <person name="Vallat J.M."/>
            <person name="Joubert M."/>
            <person name="Liet J.M."/>
            <person name="Simon L."/>
            <person name="Vincent M."/>
            <person name="Kuery S."/>
            <person name="Boisseau P."/>
            <person name="Schmitt S."/>
            <person name="Mercier S."/>
            <person name="Beneteau C."/>
            <person name="Larrose C."/>
            <person name="Coste M."/>
            <person name="Latypova X."/>
            <person name="Pereon Y."/>
            <person name="Mussini J.M."/>
            <person name="Bezieau S."/>
            <person name="Isidor B."/>
        </authorList>
    </citation>
    <scope>VARIANTS LCCS7 ARG-323 AND 623-TRP--GLU-1384 DEL</scope>
</reference>
<reference key="4">
    <citation type="journal article" date="2016" name="J. Neuropathol. Exp. Neurol.">
        <title>Contactin-Associated Protein 1 (CNTNAP1) Mutations Induce Characteristic Lesions of the Paranodal Region.</title>
        <authorList>
            <person name="Vallat J.M."/>
            <person name="Nizon M."/>
            <person name="Magee A."/>
            <person name="Isidor B."/>
            <person name="Magy L."/>
            <person name="Pereon Y."/>
            <person name="Richard L."/>
            <person name="Ouvrier R."/>
            <person name="Cogne B."/>
            <person name="Devaux J."/>
            <person name="Zuchner S."/>
            <person name="Mathis S."/>
        </authorList>
    </citation>
    <scope>INVOLVEMENT IN CHN3</scope>
    <scope>VARIANTS CHN3 623-TRP--GLU-1384 DEL; 671-GLN--GLU-1384 DEL AND CYS-764</scope>
    <scope>FUNCTION</scope>
</reference>
<reference key="5">
    <citation type="journal article" date="2017" name="Eur. J. Med. Genet.">
        <title>Identification of a novel CNTNAP1 mutation causing arthrogryposis multiplex congenita with cerebral and cerebellar atrophy.</title>
        <authorList>
            <person name="Lakhani S."/>
            <person name="Doan R."/>
            <person name="Almureikhi M."/>
            <person name="Partlow J.N."/>
            <person name="Al Saffar M."/>
            <person name="Elsaid M.F."/>
            <person name="Alaaraj N."/>
            <person name="James Barkovich A."/>
            <person name="Walsh C.A."/>
            <person name="Ben-Omran T."/>
        </authorList>
    </citation>
    <scope>INVOLVEMENT IN LCCS7</scope>
</reference>
<reference key="6">
    <citation type="journal article" date="2017" name="Muscle Nerve">
        <title>Novel mutation in CNTNAP1 results in congenital hypomyelinating neuropathy.</title>
        <authorList>
            <person name="Mehta P."/>
            <person name="Kuespert M."/>
            <person name="Bale T."/>
            <person name="Brownstein C.A."/>
            <person name="Towne M.C."/>
            <person name="De Girolami U."/>
            <person name="Shi J."/>
            <person name="Beggs A.H."/>
            <person name="Darras B.T."/>
            <person name="Wegner M."/>
            <person name="Piao X."/>
            <person name="Agrawal P.B."/>
        </authorList>
    </citation>
    <scope>INVOLVEMENT IN CHN3</scope>
    <scope>CHN3 VARIANT PRO-388</scope>
</reference>
<reference key="7">
    <citation type="journal article" date="2017" name="Neurol. Genet.">
        <title>CNTNAP1 mutations cause CNS hypomyelination and neuropathy with or without arthrogryposis.</title>
        <authorList>
            <person name="Hengel H."/>
            <person name="Magee A."/>
            <person name="Mahanjah M."/>
            <person name="Vallat J.M."/>
            <person name="Ouvrier R."/>
            <person name="Abu-Rashid M."/>
            <person name="Mahamid J."/>
            <person name="Schuele R."/>
            <person name="Schulze M."/>
            <person name="Kraegeloh-Mann I."/>
            <person name="Bauer P."/>
            <person name="Zuechner S."/>
            <person name="Sharkia R."/>
            <person name="Schoels L."/>
        </authorList>
    </citation>
    <scope>VARIANT LCCS7 672-TRP--GLU-1384 DEL</scope>
    <scope>VARIANTS CHN3 671-GLN--GLU-1384 DEL AND CYS-764</scope>
    <scope>FUNCTION</scope>
</reference>
<reference key="8">
    <citation type="journal article" date="2018" name="Eur. J. Hum. Genet.">
        <title>Phenotype of CNTNAP1: a study of patients demonstrating a specific severe congenital hypomyelinating neuropathy with survival beyond infancy.</title>
        <authorList>
            <person name="Low K.J."/>
            <person name="Stals K."/>
            <person name="Caswell R."/>
            <person name="Wakeling M."/>
            <person name="Clayton-Smith J."/>
            <person name="Donaldson A."/>
            <person name="Foulds N."/>
            <person name="Norman A."/>
            <person name="Splitt M."/>
            <person name="Urankar K."/>
            <person name="Vijayakumar K."/>
            <person name="Majumdar A."/>
            <person name="Study D."/>
            <person name="Ellard S."/>
            <person name="Smithson S.F."/>
        </authorList>
    </citation>
    <scope>INVOLVEMENT IN CHN3</scope>
    <scope>VARIANTS CHN3 GLN-50; PRO-212; 559-TRP--GLU-1384 DEL; 621-ARG--GLU-1384 DEL; PRO-714; 782-ARG--GLU-1384 DEL AND 896-TRP--GLU-1384 DEL</scope>
</reference>
<proteinExistence type="evidence at protein level"/>
<dbReference type="EMBL" id="U87223">
    <property type="protein sequence ID" value="AAB48481.1"/>
    <property type="molecule type" value="mRNA"/>
</dbReference>
<dbReference type="CCDS" id="CCDS11436.1"/>
<dbReference type="RefSeq" id="NP_003623.1">
    <property type="nucleotide sequence ID" value="NM_003632.3"/>
</dbReference>
<dbReference type="RefSeq" id="XP_016880727.1">
    <property type="nucleotide sequence ID" value="XM_017025238.1"/>
</dbReference>
<dbReference type="SMR" id="P78357"/>
<dbReference type="BioGRID" id="114078">
    <property type="interactions" value="107"/>
</dbReference>
<dbReference type="CORUM" id="P78357"/>
<dbReference type="FunCoup" id="P78357">
    <property type="interactions" value="1237"/>
</dbReference>
<dbReference type="IntAct" id="P78357">
    <property type="interactions" value="64"/>
</dbReference>
<dbReference type="MINT" id="P78357"/>
<dbReference type="STRING" id="9606.ENSP00000264638"/>
<dbReference type="GlyCosmos" id="P78357">
    <property type="glycosylation" value="17 sites, No reported glycans"/>
</dbReference>
<dbReference type="GlyGen" id="P78357">
    <property type="glycosylation" value="21 sites, 13 N-linked glycans (12 sites), 1 O-linked glycan (1 site)"/>
</dbReference>
<dbReference type="iPTMnet" id="P78357"/>
<dbReference type="PhosphoSitePlus" id="P78357"/>
<dbReference type="SwissPalm" id="P78357"/>
<dbReference type="BioMuta" id="CNTNAP1"/>
<dbReference type="DMDM" id="17433016"/>
<dbReference type="jPOST" id="P78357"/>
<dbReference type="MassIVE" id="P78357"/>
<dbReference type="PaxDb" id="9606-ENSP00000264638"/>
<dbReference type="PeptideAtlas" id="P78357"/>
<dbReference type="ProteomicsDB" id="57588"/>
<dbReference type="Pumba" id="P78357"/>
<dbReference type="ABCD" id="P78357">
    <property type="antibodies" value="1 sequenced antibody"/>
</dbReference>
<dbReference type="Antibodypedia" id="2336">
    <property type="antibodies" value="232 antibodies from 35 providers"/>
</dbReference>
<dbReference type="DNASU" id="8506"/>
<dbReference type="Ensembl" id="ENST00000264638.9">
    <property type="protein sequence ID" value="ENSP00000264638.3"/>
    <property type="gene ID" value="ENSG00000108797.12"/>
</dbReference>
<dbReference type="GeneID" id="8506"/>
<dbReference type="KEGG" id="hsa:8506"/>
<dbReference type="MANE-Select" id="ENST00000264638.9">
    <property type="protein sequence ID" value="ENSP00000264638.3"/>
    <property type="RefSeq nucleotide sequence ID" value="NM_003632.3"/>
    <property type="RefSeq protein sequence ID" value="NP_003623.1"/>
</dbReference>
<dbReference type="UCSC" id="uc002iay.4">
    <property type="organism name" value="human"/>
</dbReference>
<dbReference type="AGR" id="HGNC:8011"/>
<dbReference type="CTD" id="8506"/>
<dbReference type="DisGeNET" id="8506"/>
<dbReference type="GeneCards" id="CNTNAP1"/>
<dbReference type="GeneReviews" id="CNTNAP1"/>
<dbReference type="HGNC" id="HGNC:8011">
    <property type="gene designation" value="CNTNAP1"/>
</dbReference>
<dbReference type="HPA" id="ENSG00000108797">
    <property type="expression patterns" value="Tissue enhanced (brain)"/>
</dbReference>
<dbReference type="MalaCards" id="CNTNAP1"/>
<dbReference type="MIM" id="602346">
    <property type="type" value="gene"/>
</dbReference>
<dbReference type="MIM" id="616286">
    <property type="type" value="phenotype"/>
</dbReference>
<dbReference type="MIM" id="618186">
    <property type="type" value="phenotype"/>
</dbReference>
<dbReference type="neXtProt" id="NX_P78357"/>
<dbReference type="OpenTargets" id="ENSG00000108797"/>
<dbReference type="Orphanet" id="2680">
    <property type="disease" value="Hypomyelination neuropathy-arthrogryposis syndrome"/>
</dbReference>
<dbReference type="PharmGKB" id="PA26691"/>
<dbReference type="VEuPathDB" id="HostDB:ENSG00000108797"/>
<dbReference type="eggNOG" id="KOG3516">
    <property type="taxonomic scope" value="Eukaryota"/>
</dbReference>
<dbReference type="GeneTree" id="ENSGT00940000160825"/>
<dbReference type="HOGENOM" id="CLU_003504_1_0_1"/>
<dbReference type="InParanoid" id="P78357"/>
<dbReference type="OMA" id="RSGCHSN"/>
<dbReference type="OrthoDB" id="26719at2759"/>
<dbReference type="PAN-GO" id="P78357">
    <property type="GO annotations" value="0 GO annotations based on evolutionary models"/>
</dbReference>
<dbReference type="PhylomeDB" id="P78357"/>
<dbReference type="TreeFam" id="TF321823"/>
<dbReference type="PathwayCommons" id="P78357"/>
<dbReference type="Reactome" id="R-HSA-447043">
    <property type="pathway name" value="Neurofascin interactions"/>
</dbReference>
<dbReference type="SignaLink" id="P78357"/>
<dbReference type="SIGNOR" id="P78357"/>
<dbReference type="BioGRID-ORCS" id="8506">
    <property type="hits" value="33 hits in 1162 CRISPR screens"/>
</dbReference>
<dbReference type="CD-CODE" id="FB4E32DD">
    <property type="entry name" value="Presynaptic clusters and postsynaptic densities"/>
</dbReference>
<dbReference type="ChiTaRS" id="CNTNAP1">
    <property type="organism name" value="human"/>
</dbReference>
<dbReference type="GenomeRNAi" id="8506"/>
<dbReference type="Pharos" id="P78357">
    <property type="development level" value="Tbio"/>
</dbReference>
<dbReference type="PRO" id="PR:P78357"/>
<dbReference type="Proteomes" id="UP000005640">
    <property type="component" value="Chromosome 17"/>
</dbReference>
<dbReference type="RNAct" id="P78357">
    <property type="molecule type" value="protein"/>
</dbReference>
<dbReference type="Bgee" id="ENSG00000108797">
    <property type="expression patterns" value="Expressed in right hemisphere of cerebellum and 135 other cell types or tissues"/>
</dbReference>
<dbReference type="ExpressionAtlas" id="P78357">
    <property type="expression patterns" value="baseline and differential"/>
</dbReference>
<dbReference type="GO" id="GO:0098978">
    <property type="term" value="C:glutamatergic synapse"/>
    <property type="evidence" value="ECO:0007669"/>
    <property type="project" value="Ensembl"/>
</dbReference>
<dbReference type="GO" id="GO:0016020">
    <property type="term" value="C:membrane"/>
    <property type="evidence" value="ECO:0007669"/>
    <property type="project" value="UniProtKB-SubCell"/>
</dbReference>
<dbReference type="GO" id="GO:0033010">
    <property type="term" value="C:paranodal junction"/>
    <property type="evidence" value="ECO:0007669"/>
    <property type="project" value="UniProtKB-SubCell"/>
</dbReference>
<dbReference type="GO" id="GO:0033270">
    <property type="term" value="C:paranode region of axon"/>
    <property type="evidence" value="ECO:0000250"/>
    <property type="project" value="BHF-UCL"/>
</dbReference>
<dbReference type="GO" id="GO:0017124">
    <property type="term" value="F:SH3 domain binding"/>
    <property type="evidence" value="ECO:0000250"/>
    <property type="project" value="BHF-UCL"/>
</dbReference>
<dbReference type="GO" id="GO:0038023">
    <property type="term" value="F:signaling receptor activity"/>
    <property type="evidence" value="ECO:0000304"/>
    <property type="project" value="ProtInc"/>
</dbReference>
<dbReference type="GO" id="GO:0007409">
    <property type="term" value="P:axonogenesis"/>
    <property type="evidence" value="ECO:0007669"/>
    <property type="project" value="Ensembl"/>
</dbReference>
<dbReference type="GO" id="GO:0007155">
    <property type="term" value="P:cell adhesion"/>
    <property type="evidence" value="ECO:0007669"/>
    <property type="project" value="UniProtKB-KW"/>
</dbReference>
<dbReference type="GO" id="GO:0022010">
    <property type="term" value="P:central nervous system myelination"/>
    <property type="evidence" value="ECO:0000315"/>
    <property type="project" value="UniProtKB"/>
</dbReference>
<dbReference type="GO" id="GO:0007010">
    <property type="term" value="P:cytoskeleton organization"/>
    <property type="evidence" value="ECO:0000250"/>
    <property type="project" value="BHF-UCL"/>
</dbReference>
<dbReference type="GO" id="GO:0007005">
    <property type="term" value="P:mitochondrion organization"/>
    <property type="evidence" value="ECO:0007669"/>
    <property type="project" value="Ensembl"/>
</dbReference>
<dbReference type="GO" id="GO:0022011">
    <property type="term" value="P:myelination in peripheral nervous system"/>
    <property type="evidence" value="ECO:0000315"/>
    <property type="project" value="UniProtKB"/>
</dbReference>
<dbReference type="GO" id="GO:0098529">
    <property type="term" value="P:neuromuscular junction development, skeletal muscle fiber"/>
    <property type="evidence" value="ECO:0007669"/>
    <property type="project" value="Ensembl"/>
</dbReference>
<dbReference type="GO" id="GO:0050885">
    <property type="term" value="P:neuromuscular process controlling balance"/>
    <property type="evidence" value="ECO:0007669"/>
    <property type="project" value="Ensembl"/>
</dbReference>
<dbReference type="GO" id="GO:0050884">
    <property type="term" value="P:neuromuscular process controlling posture"/>
    <property type="evidence" value="ECO:0007669"/>
    <property type="project" value="Ensembl"/>
</dbReference>
<dbReference type="GO" id="GO:0048812">
    <property type="term" value="P:neuron projection morphogenesis"/>
    <property type="evidence" value="ECO:0000315"/>
    <property type="project" value="UniProtKB"/>
</dbReference>
<dbReference type="GO" id="GO:0019227">
    <property type="term" value="P:neuronal action potential propagation"/>
    <property type="evidence" value="ECO:0000250"/>
    <property type="project" value="BHF-UCL"/>
</dbReference>
<dbReference type="GO" id="GO:0030913">
    <property type="term" value="P:paranodal junction assembly"/>
    <property type="evidence" value="ECO:0000315"/>
    <property type="project" value="UniProtKB"/>
</dbReference>
<dbReference type="GO" id="GO:1990227">
    <property type="term" value="P:paranodal junction maintenance"/>
    <property type="evidence" value="ECO:0007669"/>
    <property type="project" value="Ensembl"/>
</dbReference>
<dbReference type="GO" id="GO:0097106">
    <property type="term" value="P:postsynaptic density organization"/>
    <property type="evidence" value="ECO:0007669"/>
    <property type="project" value="Ensembl"/>
</dbReference>
<dbReference type="GO" id="GO:0071205">
    <property type="term" value="P:protein localization to juxtaparanode region of axon"/>
    <property type="evidence" value="ECO:0000250"/>
    <property type="project" value="UniProtKB"/>
</dbReference>
<dbReference type="GO" id="GO:0002175">
    <property type="term" value="P:protein localization to paranode region of axon"/>
    <property type="evidence" value="ECO:0000250"/>
    <property type="project" value="BHF-UCL"/>
</dbReference>
<dbReference type="GO" id="GO:0090128">
    <property type="term" value="P:regulation of synapse maturation"/>
    <property type="evidence" value="ECO:0007669"/>
    <property type="project" value="Ensembl"/>
</dbReference>
<dbReference type="GO" id="GO:0007165">
    <property type="term" value="P:signal transduction"/>
    <property type="evidence" value="ECO:0000304"/>
    <property type="project" value="ProtInc"/>
</dbReference>
<dbReference type="CDD" id="cd00054">
    <property type="entry name" value="EGF_CA"/>
    <property type="match status" value="1"/>
</dbReference>
<dbReference type="CDD" id="cd00057">
    <property type="entry name" value="FA58C"/>
    <property type="match status" value="1"/>
</dbReference>
<dbReference type="CDD" id="cd00110">
    <property type="entry name" value="LamG"/>
    <property type="match status" value="4"/>
</dbReference>
<dbReference type="FunFam" id="2.60.120.200:FF:000082">
    <property type="entry name" value="Contactin associated protein 1"/>
    <property type="match status" value="1"/>
</dbReference>
<dbReference type="FunFam" id="2.60.120.200:FF:000099">
    <property type="entry name" value="Contactin associated protein 1"/>
    <property type="match status" value="1"/>
</dbReference>
<dbReference type="FunFam" id="2.60.120.1000:FF:000005">
    <property type="entry name" value="Contactin associated protein-like 2"/>
    <property type="match status" value="1"/>
</dbReference>
<dbReference type="FunFam" id="2.60.120.200:FF:000088">
    <property type="entry name" value="Contactin associated protein-like 2"/>
    <property type="match status" value="1"/>
</dbReference>
<dbReference type="FunFam" id="2.60.120.260:FF:000016">
    <property type="entry name" value="Contactin-associated protein-like 4 isoform 1"/>
    <property type="match status" value="1"/>
</dbReference>
<dbReference type="FunFam" id="2.60.120.200:FF:000026">
    <property type="entry name" value="contactin-associated protein-like 4 isoform X1"/>
    <property type="match status" value="1"/>
</dbReference>
<dbReference type="FunFam" id="2.10.25.10:FF:000015">
    <property type="entry name" value="neurexin-1 isoform X1"/>
    <property type="match status" value="2"/>
</dbReference>
<dbReference type="Gene3D" id="2.60.120.1000">
    <property type="match status" value="1"/>
</dbReference>
<dbReference type="Gene3D" id="2.60.120.200">
    <property type="match status" value="4"/>
</dbReference>
<dbReference type="Gene3D" id="2.60.120.260">
    <property type="entry name" value="Galactose-binding domain-like"/>
    <property type="match status" value="1"/>
</dbReference>
<dbReference type="Gene3D" id="2.10.25.10">
    <property type="entry name" value="Laminin"/>
    <property type="match status" value="2"/>
</dbReference>
<dbReference type="InterPro" id="IPR013320">
    <property type="entry name" value="ConA-like_dom_sf"/>
</dbReference>
<dbReference type="InterPro" id="IPR000742">
    <property type="entry name" value="EGF-like_dom"/>
</dbReference>
<dbReference type="InterPro" id="IPR000421">
    <property type="entry name" value="FA58C"/>
</dbReference>
<dbReference type="InterPro" id="IPR036056">
    <property type="entry name" value="Fibrinogen-like_C"/>
</dbReference>
<dbReference type="InterPro" id="IPR002181">
    <property type="entry name" value="Fibrinogen_a/b/g_C_dom"/>
</dbReference>
<dbReference type="InterPro" id="IPR008979">
    <property type="entry name" value="Galactose-bd-like_sf"/>
</dbReference>
<dbReference type="InterPro" id="IPR001791">
    <property type="entry name" value="Laminin_G"/>
</dbReference>
<dbReference type="InterPro" id="IPR003585">
    <property type="entry name" value="Neurexin-like"/>
</dbReference>
<dbReference type="InterPro" id="IPR050372">
    <property type="entry name" value="Neurexin-related_CASP"/>
</dbReference>
<dbReference type="PANTHER" id="PTHR15036:SF43">
    <property type="entry name" value="CONTACTIN-ASSOCIATED PROTEIN 1"/>
    <property type="match status" value="1"/>
</dbReference>
<dbReference type="PANTHER" id="PTHR15036">
    <property type="entry name" value="PIKACHURIN-LIKE PROTEIN"/>
    <property type="match status" value="1"/>
</dbReference>
<dbReference type="Pfam" id="PF00754">
    <property type="entry name" value="F5_F8_type_C"/>
    <property type="match status" value="1"/>
</dbReference>
<dbReference type="Pfam" id="PF02210">
    <property type="entry name" value="Laminin_G_2"/>
    <property type="match status" value="4"/>
</dbReference>
<dbReference type="SMART" id="SM00294">
    <property type="entry name" value="4.1m"/>
    <property type="match status" value="1"/>
</dbReference>
<dbReference type="SMART" id="SM00231">
    <property type="entry name" value="FA58C"/>
    <property type="match status" value="1"/>
</dbReference>
<dbReference type="SMART" id="SM00282">
    <property type="entry name" value="LamG"/>
    <property type="match status" value="4"/>
</dbReference>
<dbReference type="SUPFAM" id="SSF49899">
    <property type="entry name" value="Concanavalin A-like lectins/glucanases"/>
    <property type="match status" value="4"/>
</dbReference>
<dbReference type="SUPFAM" id="SSF57196">
    <property type="entry name" value="EGF/Laminin"/>
    <property type="match status" value="1"/>
</dbReference>
<dbReference type="SUPFAM" id="SSF56496">
    <property type="entry name" value="Fibrinogen C-terminal domain-like"/>
    <property type="match status" value="1"/>
</dbReference>
<dbReference type="SUPFAM" id="SSF49785">
    <property type="entry name" value="Galactose-binding domain-like"/>
    <property type="match status" value="1"/>
</dbReference>
<dbReference type="PROSITE" id="PS50026">
    <property type="entry name" value="EGF_3"/>
    <property type="match status" value="2"/>
</dbReference>
<dbReference type="PROSITE" id="PS01285">
    <property type="entry name" value="FA58C_1"/>
    <property type="match status" value="1"/>
</dbReference>
<dbReference type="PROSITE" id="PS01286">
    <property type="entry name" value="FA58C_2"/>
    <property type="match status" value="1"/>
</dbReference>
<dbReference type="PROSITE" id="PS50022">
    <property type="entry name" value="FA58C_3"/>
    <property type="match status" value="1"/>
</dbReference>
<dbReference type="PROSITE" id="PS51406">
    <property type="entry name" value="FIBRINOGEN_C_2"/>
    <property type="match status" value="1"/>
</dbReference>
<dbReference type="PROSITE" id="PS50025">
    <property type="entry name" value="LAM_G_DOMAIN"/>
    <property type="match status" value="4"/>
</dbReference>